<sequence length="116" mass="13662">MLNVTKGKEIRIEVRFADNFIKRFLGLMFRKPRYVLIFVLPLETRINASVHGLFMREAIDVIFLNSNKEVVDLTVLKPWRFYVPKRPAKYIVEGPRGIIEALSVEVGDRLEWNRMI</sequence>
<protein>
    <recommendedName>
        <fullName>UPF0127 protein PF1050</fullName>
    </recommendedName>
</protein>
<evidence type="ECO:0000305" key="1"/>
<accession>Q8U203</accession>
<organism>
    <name type="scientific">Pyrococcus furiosus (strain ATCC 43587 / DSM 3638 / JCM 8422 / Vc1)</name>
    <dbReference type="NCBI Taxonomy" id="186497"/>
    <lineage>
        <taxon>Archaea</taxon>
        <taxon>Methanobacteriati</taxon>
        <taxon>Methanobacteriota</taxon>
        <taxon>Thermococci</taxon>
        <taxon>Thermococcales</taxon>
        <taxon>Thermococcaceae</taxon>
        <taxon>Pyrococcus</taxon>
    </lineage>
</organism>
<dbReference type="EMBL" id="AE009950">
    <property type="protein sequence ID" value="AAL81174.1"/>
    <property type="molecule type" value="Genomic_DNA"/>
</dbReference>
<dbReference type="RefSeq" id="WP_014835314.1">
    <property type="nucleotide sequence ID" value="NZ_CP023154.1"/>
</dbReference>
<dbReference type="SMR" id="Q8U203"/>
<dbReference type="STRING" id="186497.PF1050"/>
<dbReference type="PaxDb" id="186497-PF1050"/>
<dbReference type="KEGG" id="pfu:PF1050"/>
<dbReference type="PATRIC" id="fig|186497.12.peg.1111"/>
<dbReference type="eggNOG" id="arCOG03113">
    <property type="taxonomic scope" value="Archaea"/>
</dbReference>
<dbReference type="HOGENOM" id="CLU_097039_4_2_2"/>
<dbReference type="OrthoDB" id="64208at2157"/>
<dbReference type="PhylomeDB" id="Q8U203"/>
<dbReference type="Proteomes" id="UP000001013">
    <property type="component" value="Chromosome"/>
</dbReference>
<dbReference type="Gene3D" id="2.60.120.1140">
    <property type="entry name" value="Protein of unknown function DUF192"/>
    <property type="match status" value="1"/>
</dbReference>
<dbReference type="HAMAP" id="MF_00263">
    <property type="entry name" value="UPF0127"/>
    <property type="match status" value="1"/>
</dbReference>
<dbReference type="InterPro" id="IPR003795">
    <property type="entry name" value="DUF192"/>
</dbReference>
<dbReference type="InterPro" id="IPR038695">
    <property type="entry name" value="Saro_0823-like_sf"/>
</dbReference>
<dbReference type="InterPro" id="IPR022906">
    <property type="entry name" value="UPF0127"/>
</dbReference>
<dbReference type="NCBIfam" id="NF002996">
    <property type="entry name" value="PRK03760.1"/>
    <property type="match status" value="1"/>
</dbReference>
<dbReference type="PANTHER" id="PTHR37953">
    <property type="entry name" value="UPF0127 PROTEIN MJ1496"/>
    <property type="match status" value="1"/>
</dbReference>
<dbReference type="PANTHER" id="PTHR37953:SF1">
    <property type="entry name" value="UPF0127 PROTEIN MJ1496"/>
    <property type="match status" value="1"/>
</dbReference>
<dbReference type="Pfam" id="PF02643">
    <property type="entry name" value="DUF192"/>
    <property type="match status" value="1"/>
</dbReference>
<keyword id="KW-1185">Reference proteome</keyword>
<gene>
    <name type="ordered locus">PF1050</name>
</gene>
<reference key="1">
    <citation type="journal article" date="1999" name="Genetics">
        <title>Divergence of the hyperthermophilic archaea Pyrococcus furiosus and P. horikoshii inferred from complete genomic sequences.</title>
        <authorList>
            <person name="Maeder D.L."/>
            <person name="Weiss R.B."/>
            <person name="Dunn D.M."/>
            <person name="Cherry J.L."/>
            <person name="Gonzalez J.M."/>
            <person name="DiRuggiero J."/>
            <person name="Robb F.T."/>
        </authorList>
    </citation>
    <scope>NUCLEOTIDE SEQUENCE [LARGE SCALE GENOMIC DNA]</scope>
    <source>
        <strain>ATCC 43587 / DSM 3638 / JCM 8422 / Vc1</strain>
    </source>
</reference>
<feature type="chain" id="PRO_0000150053" description="UPF0127 protein PF1050">
    <location>
        <begin position="1"/>
        <end position="116"/>
    </location>
</feature>
<name>Y1050_PYRFU</name>
<proteinExistence type="inferred from homology"/>
<comment type="similarity">
    <text evidence="1">Belongs to the UPF0127 family.</text>
</comment>